<protein>
    <recommendedName>
        <fullName>S-ribosylhomocysteine lyase</fullName>
        <ecNumber>4.4.1.21</ecNumber>
    </recommendedName>
    <alternativeName>
        <fullName>AI-2 synthesis protein</fullName>
    </alternativeName>
    <alternativeName>
        <fullName>Autoinducer-2 production protein LuxS</fullName>
    </alternativeName>
</protein>
<comment type="function">
    <text evidence="1">Involved in the synthesis of autoinducer 2 (AI-2) which is secreted by bacteria and is used to communicate both the cell density and the metabolic potential of the environment. The regulation of gene expression in response to changes in cell density is called quorum sensing. Catalyzes the transformation of S-ribosylhomocysteine (RHC) to homocysteine (HC) and 4,5-dihydroxy-2,3-pentadione (DPD) (By similarity).</text>
</comment>
<comment type="catalytic activity">
    <reaction>
        <text>S-(5-deoxy-D-ribos-5-yl)-L-homocysteine = (S)-4,5-dihydroxypentane-2,3-dione + L-homocysteine</text>
        <dbReference type="Rhea" id="RHEA:17753"/>
        <dbReference type="ChEBI" id="CHEBI:29484"/>
        <dbReference type="ChEBI" id="CHEBI:58195"/>
        <dbReference type="ChEBI" id="CHEBI:58199"/>
        <dbReference type="EC" id="4.4.1.21"/>
    </reaction>
</comment>
<comment type="cofactor">
    <cofactor evidence="1">
        <name>Fe cation</name>
        <dbReference type="ChEBI" id="CHEBI:24875"/>
    </cofactor>
    <text evidence="1">Binds 1 Fe cation per subunit.</text>
</comment>
<comment type="subunit">
    <text evidence="1">Homodimer.</text>
</comment>
<comment type="similarity">
    <text evidence="2">Belongs to the LuxS family.</text>
</comment>
<organism>
    <name type="scientific">Streptococcus pyogenes serotype M1</name>
    <dbReference type="NCBI Taxonomy" id="301447"/>
    <lineage>
        <taxon>Bacteria</taxon>
        <taxon>Bacillati</taxon>
        <taxon>Bacillota</taxon>
        <taxon>Bacilli</taxon>
        <taxon>Lactobacillales</taxon>
        <taxon>Streptococcaceae</taxon>
        <taxon>Streptococcus</taxon>
    </lineage>
</organism>
<keyword id="KW-0071">Autoinducer synthesis</keyword>
<keyword id="KW-0408">Iron</keyword>
<keyword id="KW-0456">Lyase</keyword>
<keyword id="KW-0479">Metal-binding</keyword>
<keyword id="KW-0673">Quorum sensing</keyword>
<keyword id="KW-1185">Reference proteome</keyword>
<sequence length="160" mass="17979">MTKEVIVESFELDHTIVKAPYVRLISEEFGPKGDRITNFDVRLVQPNQNSIETAGLHTIEHLLAKLIRQRIDGMIDCSPFGCRTGFHLIMWGKHSSTDIAKVIKSSLEEIATGITWEDVPGTTLESCGNYKDHSLFAAKEWAQLIIDQGISDDPFSRHVI</sequence>
<proteinExistence type="inferred from homology"/>
<dbReference type="EC" id="4.4.1.21"/>
<dbReference type="EMBL" id="AE004092">
    <property type="protein sequence ID" value="AAK34410.1"/>
    <property type="molecule type" value="Genomic_DNA"/>
</dbReference>
<dbReference type="EMBL" id="CP000017">
    <property type="protein sequence ID" value="AAZ51967.1"/>
    <property type="molecule type" value="Genomic_DNA"/>
</dbReference>
<dbReference type="RefSeq" id="NP_269689.3">
    <property type="nucleotide sequence ID" value="NC_002737.2"/>
</dbReference>
<dbReference type="SMR" id="P0C0C8"/>
<dbReference type="PaxDb" id="1314-HKU360_01398"/>
<dbReference type="KEGG" id="spy:SPy_1642"/>
<dbReference type="KEGG" id="spz:M5005_Spy1349"/>
<dbReference type="PATRIC" id="fig|160490.10.peg.1431"/>
<dbReference type="HOGENOM" id="CLU_107531_2_1_9"/>
<dbReference type="OMA" id="DVSPMGC"/>
<dbReference type="Proteomes" id="UP000000750">
    <property type="component" value="Chromosome"/>
</dbReference>
<dbReference type="GO" id="GO:0005506">
    <property type="term" value="F:iron ion binding"/>
    <property type="evidence" value="ECO:0007669"/>
    <property type="project" value="InterPro"/>
</dbReference>
<dbReference type="GO" id="GO:0043768">
    <property type="term" value="F:S-ribosylhomocysteine lyase activity"/>
    <property type="evidence" value="ECO:0007669"/>
    <property type="project" value="UniProtKB-UniRule"/>
</dbReference>
<dbReference type="GO" id="GO:0009372">
    <property type="term" value="P:quorum sensing"/>
    <property type="evidence" value="ECO:0007669"/>
    <property type="project" value="UniProtKB-UniRule"/>
</dbReference>
<dbReference type="Gene3D" id="3.30.1360.80">
    <property type="entry name" value="S-ribosylhomocysteinase (LuxS)"/>
    <property type="match status" value="1"/>
</dbReference>
<dbReference type="HAMAP" id="MF_00091">
    <property type="entry name" value="LuxS"/>
    <property type="match status" value="1"/>
</dbReference>
<dbReference type="InterPro" id="IPR037005">
    <property type="entry name" value="LuxS_sf"/>
</dbReference>
<dbReference type="InterPro" id="IPR011249">
    <property type="entry name" value="Metalloenz_LuxS/M16"/>
</dbReference>
<dbReference type="InterPro" id="IPR003815">
    <property type="entry name" value="S-ribosylhomocysteinase"/>
</dbReference>
<dbReference type="NCBIfam" id="NF002607">
    <property type="entry name" value="PRK02260.2-5"/>
    <property type="match status" value="1"/>
</dbReference>
<dbReference type="NCBIfam" id="NF002608">
    <property type="entry name" value="PRK02260.3-1"/>
    <property type="match status" value="1"/>
</dbReference>
<dbReference type="PANTHER" id="PTHR35799">
    <property type="entry name" value="S-RIBOSYLHOMOCYSTEINE LYASE"/>
    <property type="match status" value="1"/>
</dbReference>
<dbReference type="PANTHER" id="PTHR35799:SF1">
    <property type="entry name" value="S-RIBOSYLHOMOCYSTEINE LYASE"/>
    <property type="match status" value="1"/>
</dbReference>
<dbReference type="Pfam" id="PF02664">
    <property type="entry name" value="LuxS"/>
    <property type="match status" value="1"/>
</dbReference>
<dbReference type="PIRSF" id="PIRSF006160">
    <property type="entry name" value="AI2"/>
    <property type="match status" value="1"/>
</dbReference>
<dbReference type="PRINTS" id="PR01487">
    <property type="entry name" value="LUXSPROTEIN"/>
</dbReference>
<dbReference type="SUPFAM" id="SSF63411">
    <property type="entry name" value="LuxS/MPP-like metallohydrolase"/>
    <property type="match status" value="1"/>
</dbReference>
<gene>
    <name type="primary">luxS</name>
    <name type="ordered locus">SPy_1642</name>
    <name type="ordered locus">M5005_Spy1349</name>
</gene>
<reference key="1">
    <citation type="journal article" date="2001" name="Proc. Natl. Acad. Sci. U.S.A.">
        <title>Complete genome sequence of an M1 strain of Streptococcus pyogenes.</title>
        <authorList>
            <person name="Ferretti J.J."/>
            <person name="McShan W.M."/>
            <person name="Ajdic D.J."/>
            <person name="Savic D.J."/>
            <person name="Savic G."/>
            <person name="Lyon K."/>
            <person name="Primeaux C."/>
            <person name="Sezate S."/>
            <person name="Suvorov A.N."/>
            <person name="Kenton S."/>
            <person name="Lai H.S."/>
            <person name="Lin S.P."/>
            <person name="Qian Y."/>
            <person name="Jia H.G."/>
            <person name="Najar F.Z."/>
            <person name="Ren Q."/>
            <person name="Zhu H."/>
            <person name="Song L."/>
            <person name="White J."/>
            <person name="Yuan X."/>
            <person name="Clifton S.W."/>
            <person name="Roe B.A."/>
            <person name="McLaughlin R.E."/>
        </authorList>
    </citation>
    <scope>NUCLEOTIDE SEQUENCE [LARGE SCALE GENOMIC DNA]</scope>
    <source>
        <strain>ATCC 700294 / SF370 / Serotype M1</strain>
    </source>
</reference>
<reference key="2">
    <citation type="journal article" date="2005" name="J. Infect. Dis.">
        <title>Evolutionary origin and emergence of a highly successful clone of serotype M1 group A Streptococcus involved multiple horizontal gene transfer events.</title>
        <authorList>
            <person name="Sumby P."/>
            <person name="Porcella S.F."/>
            <person name="Madrigal A.G."/>
            <person name="Barbian K.D."/>
            <person name="Virtaneva K."/>
            <person name="Ricklefs S.M."/>
            <person name="Sturdevant D.E."/>
            <person name="Graham M.R."/>
            <person name="Vuopio-Varkila J."/>
            <person name="Hoe N.P."/>
            <person name="Musser J.M."/>
        </authorList>
    </citation>
    <scope>NUCLEOTIDE SEQUENCE [LARGE SCALE GENOMIC DNA]</scope>
    <source>
        <strain>ATCC BAA-947 / MGAS5005 / Serotype M1</strain>
    </source>
</reference>
<accession>P0C0C8</accession>
<accession>P0A3P7</accession>
<accession>Q48XF8</accession>
<accession>Q99YL7</accession>
<accession>Q9EVB4</accession>
<evidence type="ECO:0000250" key="1"/>
<evidence type="ECO:0000305" key="2"/>
<name>LUXS_STRP1</name>
<feature type="chain" id="PRO_0000172268" description="S-ribosylhomocysteine lyase">
    <location>
        <begin position="1"/>
        <end position="160"/>
    </location>
</feature>
<feature type="binding site" evidence="1">
    <location>
        <position position="57"/>
    </location>
    <ligand>
        <name>Fe cation</name>
        <dbReference type="ChEBI" id="CHEBI:24875"/>
    </ligand>
</feature>
<feature type="binding site" evidence="1">
    <location>
        <position position="61"/>
    </location>
    <ligand>
        <name>Fe cation</name>
        <dbReference type="ChEBI" id="CHEBI:24875"/>
    </ligand>
</feature>
<feature type="binding site" evidence="1">
    <location>
        <position position="127"/>
    </location>
    <ligand>
        <name>Fe cation</name>
        <dbReference type="ChEBI" id="CHEBI:24875"/>
    </ligand>
</feature>